<proteinExistence type="evidence at transcript level"/>
<keyword id="KW-0749">Sporulation</keyword>
<keyword id="KW-0800">Toxin</keyword>
<keyword id="KW-0843">Virulence</keyword>
<gene>
    <name type="primary">cry1Ic</name>
    <name type="synonym">cryII(c)</name>
</gene>
<comment type="function">
    <text>Promotes colloidosmotic lysis by binding to the midgut epithelial cells of insects.</text>
</comment>
<comment type="developmental stage">
    <text>The crystal protein is produced during sporulation and is accumulated both as an inclusion and as part of the spore coat.</text>
</comment>
<comment type="miscellaneous">
    <text>Toxic segment of the protein is located in the N-terminus.</text>
</comment>
<comment type="similarity">
    <text evidence="1">Belongs to the delta endotoxin family.</text>
</comment>
<dbReference type="EMBL" id="AF056933">
    <property type="protein sequence ID" value="AAC62933.1"/>
    <property type="molecule type" value="Genomic_DNA"/>
</dbReference>
<dbReference type="SMR" id="O87404"/>
<dbReference type="GO" id="GO:0005102">
    <property type="term" value="F:signaling receptor binding"/>
    <property type="evidence" value="ECO:0007669"/>
    <property type="project" value="InterPro"/>
</dbReference>
<dbReference type="GO" id="GO:0090729">
    <property type="term" value="F:toxin activity"/>
    <property type="evidence" value="ECO:0007669"/>
    <property type="project" value="UniProtKB-KW"/>
</dbReference>
<dbReference type="GO" id="GO:0030435">
    <property type="term" value="P:sporulation resulting in formation of a cellular spore"/>
    <property type="evidence" value="ECO:0007669"/>
    <property type="project" value="UniProtKB-KW"/>
</dbReference>
<dbReference type="GO" id="GO:0001907">
    <property type="term" value="P:symbiont-mediated killing of host cell"/>
    <property type="evidence" value="ECO:0007669"/>
    <property type="project" value="InterPro"/>
</dbReference>
<dbReference type="CDD" id="cd04085">
    <property type="entry name" value="delta_endotoxin_C"/>
    <property type="match status" value="1"/>
</dbReference>
<dbReference type="Gene3D" id="2.60.120.260">
    <property type="entry name" value="Galactose-binding domain-like"/>
    <property type="match status" value="1"/>
</dbReference>
<dbReference type="Gene3D" id="2.100.10.10">
    <property type="entry name" value="Pesticidal crystal protein, central domain"/>
    <property type="match status" value="1"/>
</dbReference>
<dbReference type="Gene3D" id="1.20.190.10">
    <property type="entry name" value="Pesticidal crystal protein, N-terminal domain"/>
    <property type="match status" value="1"/>
</dbReference>
<dbReference type="InterPro" id="IPR008979">
    <property type="entry name" value="Galactose-bd-like_sf"/>
</dbReference>
<dbReference type="InterPro" id="IPR038979">
    <property type="entry name" value="Pest_crys"/>
</dbReference>
<dbReference type="InterPro" id="IPR005638">
    <property type="entry name" value="Pest_crys_dom-III"/>
</dbReference>
<dbReference type="InterPro" id="IPR005639">
    <property type="entry name" value="Pest_crys_dom_I"/>
</dbReference>
<dbReference type="InterPro" id="IPR036716">
    <property type="entry name" value="Pest_crys_N_sf"/>
</dbReference>
<dbReference type="InterPro" id="IPR036399">
    <property type="entry name" value="Pest_cryst_cen_dom_sf"/>
</dbReference>
<dbReference type="InterPro" id="IPR001178">
    <property type="entry name" value="Pest_cryst_dom_II"/>
</dbReference>
<dbReference type="PANTHER" id="PTHR37003">
    <property type="entry name" value="ENDOTOXIN_N DOMAIN-CONTAINING PROTEIN-RELATED"/>
    <property type="match status" value="1"/>
</dbReference>
<dbReference type="PANTHER" id="PTHR37003:SF2">
    <property type="entry name" value="PESTICIDAL CRYSTAL PROTEIN N-TERMINAL DOMAIN-CONTAINING PROTEIN"/>
    <property type="match status" value="1"/>
</dbReference>
<dbReference type="Pfam" id="PF03944">
    <property type="entry name" value="Endotoxin_C"/>
    <property type="match status" value="1"/>
</dbReference>
<dbReference type="Pfam" id="PF00555">
    <property type="entry name" value="Endotoxin_M"/>
    <property type="match status" value="1"/>
</dbReference>
<dbReference type="Pfam" id="PF03945">
    <property type="entry name" value="Endotoxin_N"/>
    <property type="match status" value="1"/>
</dbReference>
<dbReference type="SUPFAM" id="SSF51096">
    <property type="entry name" value="delta-Endotoxin (insectocide), middle domain"/>
    <property type="match status" value="1"/>
</dbReference>
<dbReference type="SUPFAM" id="SSF56849">
    <property type="entry name" value="delta-Endotoxin (insectocide), N-terminal domain"/>
    <property type="match status" value="1"/>
</dbReference>
<dbReference type="SUPFAM" id="SSF49785">
    <property type="entry name" value="Galactose-binding domain-like"/>
    <property type="match status" value="1"/>
</dbReference>
<sequence length="719" mass="81210">MKLKNPDKHQTLSSNAKVDKIATDSLKNETDIELKNMNNEDYLRMSEHESIDPFVSASTIQTGIGIAGKILGTLGVPFPGQIASLYSFILGELWPKGKSQWEIFMEHVEAIINRKISTYARNKALTDLKGLGDALAVYHESLESWVGNRNNTRARSVVKNQYIALELMFVQKLPSFAVSGEEVPLLPIYAQAANLHLLLLRDASIFEKNGGLSASEISTFYNRQVERTRDYSYHCVKWNNTGLNNLRATNGQSWVRYNQFRKDIELMVLDLVRVFPSYDTLVYPIKTTSQLTREVYTDAIGTVDPNQALRSTTWYNNNAPSFSAIEAAVIRSPHLLDFLEKVTIYSLLSRWSNTQYMNMWGGHRLESRPIGGALNTSTQGSTNTSINPVTLQFTSRDFYRTESWAGLNLFLTQPVNGVPRVDFHWKFPTLPIASDNFYYLGYAGVGTQLQDSENELPPETTGQPNYESYSHRLSHIGLISGSHVKALVYSWTHRSADRTNTIEPNSITQIPLVKAFNLSSGAAVVRGPGFTGGHILRRTKSGTFGHIRVNINPPFAQRYRVRMSYASTTDLQFHTSINGKAINQGNFSATMNRGEDLDYKTFRTVGFTTPFSFSDVQSTFTIGAWNFSSGNEVYIGRIEFVPVEVTYEAEYDFEKAQEKVTALFTSTNPRGLKTDVKDYHIDQVSNLVESLSDELYLDEKRELFEIVKYAKQIHIERNM</sequence>
<organism>
    <name type="scientific">Bacillus thuringiensis</name>
    <dbReference type="NCBI Taxonomy" id="1428"/>
    <lineage>
        <taxon>Bacteria</taxon>
        <taxon>Bacillati</taxon>
        <taxon>Bacillota</taxon>
        <taxon>Bacilli</taxon>
        <taxon>Bacillales</taxon>
        <taxon>Bacillaceae</taxon>
        <taxon>Bacillus</taxon>
        <taxon>Bacillus cereus group</taxon>
    </lineage>
</organism>
<feature type="chain" id="PRO_0000174050" description="Pesticidal crystal protein Cry1Ic">
    <location>
        <begin position="1"/>
        <end position="719"/>
    </location>
</feature>
<name>CR1IC_BACTU</name>
<reference key="1">
    <citation type="submission" date="1998-03" db="EMBL/GenBank/DDBJ databases">
        <authorList>
            <person name="Osman Y.A."/>
            <person name="Madkour M.A."/>
            <person name="Bulla L.A. Jr."/>
        </authorList>
    </citation>
    <scope>NUCLEOTIDE SEQUENCE [GENOMIC DNA]</scope>
    <source>
        <strain>C18 / Egypt</strain>
    </source>
</reference>
<evidence type="ECO:0000305" key="1"/>
<accession>O87404</accession>
<protein>
    <recommendedName>
        <fullName>Pesticidal crystal protein Cry1Ic</fullName>
    </recommendedName>
    <alternativeName>
        <fullName>81 kDa crystal protein</fullName>
    </alternativeName>
    <alternativeName>
        <fullName>Crystaline entomocidal protoxin</fullName>
    </alternativeName>
    <alternativeName>
        <fullName>Insecticidal delta-endotoxin CryII(c)</fullName>
    </alternativeName>
</protein>